<dbReference type="EC" id="7.1.1.-" evidence="1"/>
<dbReference type="EMBL" id="AP008231">
    <property type="protein sequence ID" value="BAD79809.1"/>
    <property type="molecule type" value="Genomic_DNA"/>
</dbReference>
<dbReference type="RefSeq" id="WP_011243929.1">
    <property type="nucleotide sequence ID" value="NZ_CP085785.1"/>
</dbReference>
<dbReference type="SMR" id="Q5N1L1"/>
<dbReference type="KEGG" id="syc:syc1619_c"/>
<dbReference type="eggNOG" id="ENOG5032XZT">
    <property type="taxonomic scope" value="Bacteria"/>
</dbReference>
<dbReference type="Proteomes" id="UP000001175">
    <property type="component" value="Chromosome"/>
</dbReference>
<dbReference type="GO" id="GO:0031676">
    <property type="term" value="C:plasma membrane-derived thylakoid membrane"/>
    <property type="evidence" value="ECO:0007669"/>
    <property type="project" value="UniProtKB-SubCell"/>
</dbReference>
<dbReference type="GO" id="GO:0016655">
    <property type="term" value="F:oxidoreductase activity, acting on NAD(P)H, quinone or similar compound as acceptor"/>
    <property type="evidence" value="ECO:0007669"/>
    <property type="project" value="UniProtKB-UniRule"/>
</dbReference>
<dbReference type="GO" id="GO:0048038">
    <property type="term" value="F:quinone binding"/>
    <property type="evidence" value="ECO:0007669"/>
    <property type="project" value="UniProtKB-KW"/>
</dbReference>
<dbReference type="HAMAP" id="MF_01354">
    <property type="entry name" value="NDH1_NDH1O"/>
    <property type="match status" value="1"/>
</dbReference>
<dbReference type="InterPro" id="IPR020905">
    <property type="entry name" value="NdhO"/>
</dbReference>
<dbReference type="Pfam" id="PF11910">
    <property type="entry name" value="NdhO"/>
    <property type="match status" value="1"/>
</dbReference>
<keyword id="KW-0472">Membrane</keyword>
<keyword id="KW-0520">NAD</keyword>
<keyword id="KW-0521">NADP</keyword>
<keyword id="KW-0618">Plastoquinone</keyword>
<keyword id="KW-0874">Quinone</keyword>
<keyword id="KW-0793">Thylakoid</keyword>
<keyword id="KW-1278">Translocase</keyword>
<keyword id="KW-0813">Transport</keyword>
<comment type="function">
    <text evidence="1">NDH-1 shuttles electrons from an unknown electron donor, via FMN and iron-sulfur (Fe-S) centers, to quinones in the respiratory and/or the photosynthetic chain. The immediate electron acceptor for the enzyme in this species is believed to be plastoquinone. Couples the redox reaction to proton translocation, and thus conserves the redox energy in a proton gradient. Cyanobacterial NDH-1 also plays a role in inorganic carbon-concentration.</text>
</comment>
<comment type="catalytic activity">
    <reaction evidence="1">
        <text>a plastoquinone + NADH + (n+1) H(+)(in) = a plastoquinol + NAD(+) + n H(+)(out)</text>
        <dbReference type="Rhea" id="RHEA:42608"/>
        <dbReference type="Rhea" id="RHEA-COMP:9561"/>
        <dbReference type="Rhea" id="RHEA-COMP:9562"/>
        <dbReference type="ChEBI" id="CHEBI:15378"/>
        <dbReference type="ChEBI" id="CHEBI:17757"/>
        <dbReference type="ChEBI" id="CHEBI:57540"/>
        <dbReference type="ChEBI" id="CHEBI:57945"/>
        <dbReference type="ChEBI" id="CHEBI:62192"/>
    </reaction>
</comment>
<comment type="catalytic activity">
    <reaction evidence="1">
        <text>a plastoquinone + NADPH + (n+1) H(+)(in) = a plastoquinol + NADP(+) + n H(+)(out)</text>
        <dbReference type="Rhea" id="RHEA:42612"/>
        <dbReference type="Rhea" id="RHEA-COMP:9561"/>
        <dbReference type="Rhea" id="RHEA-COMP:9562"/>
        <dbReference type="ChEBI" id="CHEBI:15378"/>
        <dbReference type="ChEBI" id="CHEBI:17757"/>
        <dbReference type="ChEBI" id="CHEBI:57783"/>
        <dbReference type="ChEBI" id="CHEBI:58349"/>
        <dbReference type="ChEBI" id="CHEBI:62192"/>
    </reaction>
</comment>
<comment type="subunit">
    <text evidence="1">NDH-1 can be composed of about 15 different subunits; different subcomplexes with different compositions have been identified which probably have different functions.</text>
</comment>
<comment type="subcellular location">
    <subcellularLocation>
        <location evidence="1">Cellular thylakoid membrane</location>
        <topology evidence="1">Peripheral membrane protein</topology>
        <orientation evidence="1">Cytoplasmic side</orientation>
    </subcellularLocation>
</comment>
<comment type="similarity">
    <text evidence="1">Belongs to the complex I NdhO subunit family.</text>
</comment>
<organism>
    <name type="scientific">Synechococcus sp. (strain ATCC 27144 / PCC 6301 / SAUG 1402/1)</name>
    <name type="common">Anacystis nidulans</name>
    <dbReference type="NCBI Taxonomy" id="269084"/>
    <lineage>
        <taxon>Bacteria</taxon>
        <taxon>Bacillati</taxon>
        <taxon>Cyanobacteriota</taxon>
        <taxon>Cyanophyceae</taxon>
        <taxon>Synechococcales</taxon>
        <taxon>Synechococcaceae</taxon>
        <taxon>Synechococcus</taxon>
    </lineage>
</organism>
<gene>
    <name evidence="1" type="primary">ndhO</name>
    <name type="ordered locus">syc1619_c</name>
</gene>
<name>NDHO_SYNP6</name>
<evidence type="ECO:0000255" key="1">
    <source>
        <dbReference type="HAMAP-Rule" id="MF_01354"/>
    </source>
</evidence>
<sequence>MAAALKKGSLVRAIAEQLQGSVELLASDGRIPSYVLETNGEILDIKGDYALVRFSRPTPNVWLRLDQLQSAA</sequence>
<protein>
    <recommendedName>
        <fullName evidence="1">NAD(P)H-quinone oxidoreductase subunit O</fullName>
        <ecNumber evidence="1">7.1.1.-</ecNumber>
    </recommendedName>
    <alternativeName>
        <fullName evidence="1">NAD(P)H dehydrogenase I subunit O</fullName>
    </alternativeName>
    <alternativeName>
        <fullName>NDH-1 subunit O</fullName>
    </alternativeName>
    <alternativeName>
        <fullName>NDH-O</fullName>
    </alternativeName>
</protein>
<reference key="1">
    <citation type="journal article" date="2007" name="Photosyn. Res.">
        <title>Complete nucleotide sequence of the freshwater unicellular cyanobacterium Synechococcus elongatus PCC 6301 chromosome: gene content and organization.</title>
        <authorList>
            <person name="Sugita C."/>
            <person name="Ogata K."/>
            <person name="Shikata M."/>
            <person name="Jikuya H."/>
            <person name="Takano J."/>
            <person name="Furumichi M."/>
            <person name="Kanehisa M."/>
            <person name="Omata T."/>
            <person name="Sugiura M."/>
            <person name="Sugita M."/>
        </authorList>
    </citation>
    <scope>NUCLEOTIDE SEQUENCE [LARGE SCALE GENOMIC DNA]</scope>
    <source>
        <strain>ATCC 27144 / PCC 6301 / SAUG 1402/1</strain>
    </source>
</reference>
<feature type="chain" id="PRO_0000353652" description="NAD(P)H-quinone oxidoreductase subunit O">
    <location>
        <begin position="1"/>
        <end position="72"/>
    </location>
</feature>
<accession>Q5N1L1</accession>
<proteinExistence type="inferred from homology"/>